<sequence length="841" mass="95159">MANANGKAATSLPEKISAKANPEADDATEIAGNIVYHAKYSPHFSPLKFGPEQALYATAESLRDRLIQLWNETYVHFNKVDPKQTYYLSMEYLQGRALTNAIGNLNLQGPYADALRTLGYELEEIAEQEKDAALGNGGLGRLASCFLDSMATLNLPAWGYGLRYRHGLFKQIITKKGQEEIPEDWLEKFSPWEIVRHDVVFPVRFFGKVQVNPDGSRKWVDGDVVQALAYDVPIPGYGTKNTISLRLWEAKARAEDLDLFQFNEGEYELAAQLHSRAQQICTVLYPGDATENGKLLRLKQQFFLCSASLQDIISRFHERSTTEGSRKWSEFPSKVAVQMNDTHPTLAIPELMRLLMDDNGLGWDEAWDVTSKTVAYTNHTVLPEALEKWSQSLMWKLLPRHMEIIEEIDKRFVQTIRDTRVDLEDKISSLSILDNNPQKPVVRMANLCVVSSHTVNGVAQLHSDILKAELFADYVSIWPNKFQNKTNGITPRRWLRFCSPELSDIITKWLKTDKWITDLDLLTGLRQFADNEELQSEWASAKTANKKRLAQYIERVTGVSIDPTSLFDIQVKRIHEYKRQLMNILGVVYRFKKLKEMKPEERKKTVPRTVMIGGKAFATYTNAKRIVKLVNDVGDVVNSDPEVNEYLKVVFVPNYNVTVAEMLIPGSELSQHISTAGMEASGTSNMKFALNGCLIIGTLDGANVEIREEVGEENFFLFGATADQVPRLRKEREDGLFKPDPRFEEAKQFVKSGVFGSYDYGPLLDSLEGNTGFGRGDYFLVGYDFPSYMDAQAKVDEAYKDRKGWLKMSILSTAGSGKFSSDRTIAQYAKEIWNIEACPVP</sequence>
<feature type="chain" id="PRO_0000188541" description="Alpha-glucan phosphorylase 2, cytosolic">
    <location>
        <begin position="1"/>
        <end position="841"/>
    </location>
</feature>
<feature type="region of interest" description="Disordered" evidence="2">
    <location>
        <begin position="1"/>
        <end position="24"/>
    </location>
</feature>
<feature type="modified residue" description="N6-(pyridoxal phosphate)lysine" evidence="1">
    <location>
        <position position="687"/>
    </location>
</feature>
<feature type="sequence conflict" description="In Ref. 3; AAL10498." evidence="3" ref="3">
    <original>A</original>
    <variation>P</variation>
    <location>
        <position position="31"/>
    </location>
</feature>
<feature type="helix" evidence="4">
    <location>
        <begin position="27"/>
        <end position="40"/>
    </location>
</feature>
<feature type="helix" evidence="4">
    <location>
        <begin position="51"/>
        <end position="80"/>
    </location>
</feature>
<feature type="strand" evidence="4">
    <location>
        <begin position="84"/>
        <end position="88"/>
    </location>
</feature>
<feature type="helix" evidence="4">
    <location>
        <begin position="98"/>
        <end position="104"/>
    </location>
</feature>
<feature type="helix" evidence="4">
    <location>
        <begin position="108"/>
        <end position="117"/>
    </location>
</feature>
<feature type="helix" evidence="4">
    <location>
        <begin position="122"/>
        <end position="126"/>
    </location>
</feature>
<feature type="helix" evidence="4">
    <location>
        <begin position="138"/>
        <end position="152"/>
    </location>
</feature>
<feature type="strand" evidence="4">
    <location>
        <begin position="157"/>
        <end position="162"/>
    </location>
</feature>
<feature type="strand" evidence="4">
    <location>
        <begin position="170"/>
        <end position="174"/>
    </location>
</feature>
<feature type="strand" evidence="4">
    <location>
        <begin position="177"/>
        <end position="181"/>
    </location>
</feature>
<feature type="strand" evidence="4">
    <location>
        <begin position="194"/>
        <end position="206"/>
    </location>
</feature>
<feature type="strand" evidence="4">
    <location>
        <begin position="208"/>
        <end position="211"/>
    </location>
</feature>
<feature type="strand" evidence="4">
    <location>
        <begin position="217"/>
        <end position="235"/>
    </location>
</feature>
<feature type="strand" evidence="4">
    <location>
        <begin position="242"/>
        <end position="251"/>
    </location>
</feature>
<feature type="helix" evidence="4">
    <location>
        <begin position="254"/>
        <end position="256"/>
    </location>
</feature>
<feature type="helix" evidence="4">
    <location>
        <begin position="259"/>
        <end position="263"/>
    </location>
</feature>
<feature type="helix" evidence="4">
    <location>
        <begin position="267"/>
        <end position="270"/>
    </location>
</feature>
<feature type="helix" evidence="4">
    <location>
        <begin position="272"/>
        <end position="280"/>
    </location>
</feature>
<feature type="helix" evidence="4">
    <location>
        <begin position="291"/>
        <end position="318"/>
    </location>
</feature>
<feature type="strand" evidence="5">
    <location>
        <begin position="323"/>
        <end position="325"/>
    </location>
</feature>
<feature type="helix" evidence="4">
    <location>
        <begin position="328"/>
        <end position="330"/>
    </location>
</feature>
<feature type="helix" evidence="4">
    <location>
        <begin position="331"/>
        <end position="334"/>
    </location>
</feature>
<feature type="strand" evidence="4">
    <location>
        <begin position="335"/>
        <end position="342"/>
    </location>
</feature>
<feature type="turn" evidence="4">
    <location>
        <begin position="343"/>
        <end position="346"/>
    </location>
</feature>
<feature type="helix" evidence="4">
    <location>
        <begin position="347"/>
        <end position="356"/>
    </location>
</feature>
<feature type="turn" evidence="6">
    <location>
        <begin position="357"/>
        <end position="359"/>
    </location>
</feature>
<feature type="helix" evidence="4">
    <location>
        <begin position="363"/>
        <end position="373"/>
    </location>
</feature>
<feature type="strand" evidence="4">
    <location>
        <begin position="374"/>
        <end position="377"/>
    </location>
</feature>
<feature type="helix" evidence="4">
    <location>
        <begin position="383"/>
        <end position="385"/>
    </location>
</feature>
<feature type="strand" evidence="4">
    <location>
        <begin position="388"/>
        <end position="390"/>
    </location>
</feature>
<feature type="helix" evidence="4">
    <location>
        <begin position="391"/>
        <end position="397"/>
    </location>
</feature>
<feature type="helix" evidence="4">
    <location>
        <begin position="399"/>
        <end position="419"/>
    </location>
</feature>
<feature type="helix" evidence="4">
    <location>
        <begin position="421"/>
        <end position="426"/>
    </location>
</feature>
<feature type="helix" evidence="4">
    <location>
        <begin position="427"/>
        <end position="430"/>
    </location>
</feature>
<feature type="strand" evidence="4">
    <location>
        <begin position="431"/>
        <end position="434"/>
    </location>
</feature>
<feature type="strand" evidence="4">
    <location>
        <begin position="437"/>
        <end position="439"/>
    </location>
</feature>
<feature type="strand" evidence="4">
    <location>
        <begin position="441"/>
        <end position="443"/>
    </location>
</feature>
<feature type="helix" evidence="4">
    <location>
        <begin position="444"/>
        <end position="451"/>
    </location>
</feature>
<feature type="strand" evidence="4">
    <location>
        <begin position="453"/>
        <end position="459"/>
    </location>
</feature>
<feature type="helix" evidence="4">
    <location>
        <begin position="460"/>
        <end position="468"/>
    </location>
</feature>
<feature type="turn" evidence="4">
    <location>
        <begin position="469"/>
        <end position="471"/>
    </location>
</feature>
<feature type="helix" evidence="4">
    <location>
        <begin position="472"/>
        <end position="477"/>
    </location>
</feature>
<feature type="strand" evidence="4">
    <location>
        <begin position="481"/>
        <end position="484"/>
    </location>
</feature>
<feature type="helix" evidence="4">
    <location>
        <begin position="492"/>
        <end position="497"/>
    </location>
</feature>
<feature type="helix" evidence="4">
    <location>
        <begin position="500"/>
        <end position="510"/>
    </location>
</feature>
<feature type="helix" evidence="4">
    <location>
        <begin position="514"/>
        <end position="516"/>
    </location>
</feature>
<feature type="helix" evidence="4">
    <location>
        <begin position="519"/>
        <end position="528"/>
    </location>
</feature>
<feature type="helix" evidence="4">
    <location>
        <begin position="532"/>
        <end position="557"/>
    </location>
</feature>
<feature type="strand" evidence="4">
    <location>
        <begin position="565"/>
        <end position="572"/>
    </location>
</feature>
<feature type="helix" evidence="4">
    <location>
        <begin position="576"/>
        <end position="578"/>
    </location>
</feature>
<feature type="helix" evidence="4">
    <location>
        <begin position="580"/>
        <end position="596"/>
    </location>
</feature>
<feature type="helix" evidence="4">
    <location>
        <begin position="599"/>
        <end position="602"/>
    </location>
</feature>
<feature type="strand" evidence="4">
    <location>
        <begin position="608"/>
        <end position="613"/>
    </location>
</feature>
<feature type="helix" evidence="4">
    <location>
        <begin position="621"/>
        <end position="638"/>
    </location>
</feature>
<feature type="turn" evidence="4">
    <location>
        <begin position="641"/>
        <end position="646"/>
    </location>
</feature>
<feature type="strand" evidence="4">
    <location>
        <begin position="647"/>
        <end position="652"/>
    </location>
</feature>
<feature type="helix" evidence="4">
    <location>
        <begin position="657"/>
        <end position="666"/>
    </location>
</feature>
<feature type="strand" evidence="4">
    <location>
        <begin position="668"/>
        <end position="672"/>
    </location>
</feature>
<feature type="helix" evidence="4">
    <location>
        <begin position="683"/>
        <end position="690"/>
    </location>
</feature>
<feature type="strand" evidence="4">
    <location>
        <begin position="694"/>
        <end position="697"/>
    </location>
</feature>
<feature type="helix" evidence="4">
    <location>
        <begin position="702"/>
        <end position="710"/>
    </location>
</feature>
<feature type="helix" evidence="4">
    <location>
        <begin position="712"/>
        <end position="714"/>
    </location>
</feature>
<feature type="strand" evidence="4">
    <location>
        <begin position="715"/>
        <end position="717"/>
    </location>
</feature>
<feature type="turn" evidence="4">
    <location>
        <begin position="722"/>
        <end position="724"/>
    </location>
</feature>
<feature type="helix" evidence="4">
    <location>
        <begin position="725"/>
        <end position="733"/>
    </location>
</feature>
<feature type="helix" evidence="4">
    <location>
        <begin position="741"/>
        <end position="751"/>
    </location>
</feature>
<feature type="turn" evidence="4">
    <location>
        <begin position="752"/>
        <end position="755"/>
    </location>
</feature>
<feature type="helix" evidence="4">
    <location>
        <begin position="761"/>
        <end position="764"/>
    </location>
</feature>
<feature type="helix" evidence="4">
    <location>
        <begin position="765"/>
        <end position="767"/>
    </location>
</feature>
<feature type="strand" evidence="4">
    <location>
        <begin position="769"/>
        <end position="772"/>
    </location>
</feature>
<feature type="helix" evidence="4">
    <location>
        <begin position="781"/>
        <end position="800"/>
    </location>
</feature>
<feature type="helix" evidence="4">
    <location>
        <begin position="802"/>
        <end position="814"/>
    </location>
</feature>
<feature type="helix" evidence="4">
    <location>
        <begin position="817"/>
        <end position="819"/>
    </location>
</feature>
<feature type="helix" evidence="4">
    <location>
        <begin position="821"/>
        <end position="831"/>
    </location>
</feature>
<accession>Q9SD76</accession>
<accession>Q93ZL3</accession>
<evidence type="ECO:0000250" key="1"/>
<evidence type="ECO:0000256" key="2">
    <source>
        <dbReference type="SAM" id="MobiDB-lite"/>
    </source>
</evidence>
<evidence type="ECO:0000305" key="3"/>
<evidence type="ECO:0007829" key="4">
    <source>
        <dbReference type="PDB" id="4BQE"/>
    </source>
</evidence>
<evidence type="ECO:0007829" key="5">
    <source>
        <dbReference type="PDB" id="4BQF"/>
    </source>
</evidence>
<evidence type="ECO:0007829" key="6">
    <source>
        <dbReference type="PDB" id="4BQI"/>
    </source>
</evidence>
<reference key="1">
    <citation type="journal article" date="2000" name="Nature">
        <title>Sequence and analysis of chromosome 3 of the plant Arabidopsis thaliana.</title>
        <authorList>
            <person name="Salanoubat M."/>
            <person name="Lemcke K."/>
            <person name="Rieger M."/>
            <person name="Ansorge W."/>
            <person name="Unseld M."/>
            <person name="Fartmann B."/>
            <person name="Valle G."/>
            <person name="Bloecker H."/>
            <person name="Perez-Alonso M."/>
            <person name="Obermaier B."/>
            <person name="Delseny M."/>
            <person name="Boutry M."/>
            <person name="Grivell L.A."/>
            <person name="Mache R."/>
            <person name="Puigdomenech P."/>
            <person name="De Simone V."/>
            <person name="Choisne N."/>
            <person name="Artiguenave F."/>
            <person name="Robert C."/>
            <person name="Brottier P."/>
            <person name="Wincker P."/>
            <person name="Cattolico L."/>
            <person name="Weissenbach J."/>
            <person name="Saurin W."/>
            <person name="Quetier F."/>
            <person name="Schaefer M."/>
            <person name="Mueller-Auer S."/>
            <person name="Gabel C."/>
            <person name="Fuchs M."/>
            <person name="Benes V."/>
            <person name="Wurmbach E."/>
            <person name="Drzonek H."/>
            <person name="Erfle H."/>
            <person name="Jordan N."/>
            <person name="Bangert S."/>
            <person name="Wiedelmann R."/>
            <person name="Kranz H."/>
            <person name="Voss H."/>
            <person name="Holland R."/>
            <person name="Brandt P."/>
            <person name="Nyakatura G."/>
            <person name="Vezzi A."/>
            <person name="D'Angelo M."/>
            <person name="Pallavicini A."/>
            <person name="Toppo S."/>
            <person name="Simionati B."/>
            <person name="Conrad A."/>
            <person name="Hornischer K."/>
            <person name="Kauer G."/>
            <person name="Loehnert T.-H."/>
            <person name="Nordsiek G."/>
            <person name="Reichelt J."/>
            <person name="Scharfe M."/>
            <person name="Schoen O."/>
            <person name="Bargues M."/>
            <person name="Terol J."/>
            <person name="Climent J."/>
            <person name="Navarro P."/>
            <person name="Collado C."/>
            <person name="Perez-Perez A."/>
            <person name="Ottenwaelder B."/>
            <person name="Duchemin D."/>
            <person name="Cooke R."/>
            <person name="Laudie M."/>
            <person name="Berger-Llauro C."/>
            <person name="Purnelle B."/>
            <person name="Masuy D."/>
            <person name="de Haan M."/>
            <person name="Maarse A.C."/>
            <person name="Alcaraz J.-P."/>
            <person name="Cottet A."/>
            <person name="Casacuberta E."/>
            <person name="Monfort A."/>
            <person name="Argiriou A."/>
            <person name="Flores M."/>
            <person name="Liguori R."/>
            <person name="Vitale D."/>
            <person name="Mannhaupt G."/>
            <person name="Haase D."/>
            <person name="Schoof H."/>
            <person name="Rudd S."/>
            <person name="Zaccaria P."/>
            <person name="Mewes H.-W."/>
            <person name="Mayer K.F.X."/>
            <person name="Kaul S."/>
            <person name="Town C.D."/>
            <person name="Koo H.L."/>
            <person name="Tallon L.J."/>
            <person name="Jenkins J."/>
            <person name="Rooney T."/>
            <person name="Rizzo M."/>
            <person name="Walts A."/>
            <person name="Utterback T."/>
            <person name="Fujii C.Y."/>
            <person name="Shea T.P."/>
            <person name="Creasy T.H."/>
            <person name="Haas B."/>
            <person name="Maiti R."/>
            <person name="Wu D."/>
            <person name="Peterson J."/>
            <person name="Van Aken S."/>
            <person name="Pai G."/>
            <person name="Militscher J."/>
            <person name="Sellers P."/>
            <person name="Gill J.E."/>
            <person name="Feldblyum T.V."/>
            <person name="Preuss D."/>
            <person name="Lin X."/>
            <person name="Nierman W.C."/>
            <person name="Salzberg S.L."/>
            <person name="White O."/>
            <person name="Venter J.C."/>
            <person name="Fraser C.M."/>
            <person name="Kaneko T."/>
            <person name="Nakamura Y."/>
            <person name="Sato S."/>
            <person name="Kato T."/>
            <person name="Asamizu E."/>
            <person name="Sasamoto S."/>
            <person name="Kimura T."/>
            <person name="Idesawa K."/>
            <person name="Kawashima K."/>
            <person name="Kishida Y."/>
            <person name="Kiyokawa C."/>
            <person name="Kohara M."/>
            <person name="Matsumoto M."/>
            <person name="Matsuno A."/>
            <person name="Muraki A."/>
            <person name="Nakayama S."/>
            <person name="Nakazaki N."/>
            <person name="Shinpo S."/>
            <person name="Takeuchi C."/>
            <person name="Wada T."/>
            <person name="Watanabe A."/>
            <person name="Yamada M."/>
            <person name="Yasuda M."/>
            <person name="Tabata S."/>
        </authorList>
    </citation>
    <scope>NUCLEOTIDE SEQUENCE [LARGE SCALE GENOMIC DNA]</scope>
    <source>
        <strain>cv. Columbia</strain>
    </source>
</reference>
<reference key="2">
    <citation type="journal article" date="2017" name="Plant J.">
        <title>Araport11: a complete reannotation of the Arabidopsis thaliana reference genome.</title>
        <authorList>
            <person name="Cheng C.Y."/>
            <person name="Krishnakumar V."/>
            <person name="Chan A.P."/>
            <person name="Thibaud-Nissen F."/>
            <person name="Schobel S."/>
            <person name="Town C.D."/>
        </authorList>
    </citation>
    <scope>GENOME REANNOTATION</scope>
    <source>
        <strain>cv. Columbia</strain>
    </source>
</reference>
<reference key="3">
    <citation type="journal article" date="2003" name="Science">
        <title>Empirical analysis of transcriptional activity in the Arabidopsis genome.</title>
        <authorList>
            <person name="Yamada K."/>
            <person name="Lim J."/>
            <person name="Dale J.M."/>
            <person name="Chen H."/>
            <person name="Shinn P."/>
            <person name="Palm C.J."/>
            <person name="Southwick A.M."/>
            <person name="Wu H.C."/>
            <person name="Kim C.J."/>
            <person name="Nguyen M."/>
            <person name="Pham P.K."/>
            <person name="Cheuk R.F."/>
            <person name="Karlin-Newmann G."/>
            <person name="Liu S.X."/>
            <person name="Lam B."/>
            <person name="Sakano H."/>
            <person name="Wu T."/>
            <person name="Yu G."/>
            <person name="Miranda M."/>
            <person name="Quach H.L."/>
            <person name="Tripp M."/>
            <person name="Chang C.H."/>
            <person name="Lee J.M."/>
            <person name="Toriumi M.J."/>
            <person name="Chan M.M."/>
            <person name="Tang C.C."/>
            <person name="Onodera C.S."/>
            <person name="Deng J.M."/>
            <person name="Akiyama K."/>
            <person name="Ansari Y."/>
            <person name="Arakawa T."/>
            <person name="Banh J."/>
            <person name="Banno F."/>
            <person name="Bowser L."/>
            <person name="Brooks S.Y."/>
            <person name="Carninci P."/>
            <person name="Chao Q."/>
            <person name="Choy N."/>
            <person name="Enju A."/>
            <person name="Goldsmith A.D."/>
            <person name="Gurjal M."/>
            <person name="Hansen N.F."/>
            <person name="Hayashizaki Y."/>
            <person name="Johnson-Hopson C."/>
            <person name="Hsuan V.W."/>
            <person name="Iida K."/>
            <person name="Karnes M."/>
            <person name="Khan S."/>
            <person name="Koesema E."/>
            <person name="Ishida J."/>
            <person name="Jiang P.X."/>
            <person name="Jones T."/>
            <person name="Kawai J."/>
            <person name="Kamiya A."/>
            <person name="Meyers C."/>
            <person name="Nakajima M."/>
            <person name="Narusaka M."/>
            <person name="Seki M."/>
            <person name="Sakurai T."/>
            <person name="Satou M."/>
            <person name="Tamse R."/>
            <person name="Vaysberg M."/>
            <person name="Wallender E.K."/>
            <person name="Wong C."/>
            <person name="Yamamura Y."/>
            <person name="Yuan S."/>
            <person name="Shinozaki K."/>
            <person name="Davis R.W."/>
            <person name="Theologis A."/>
            <person name="Ecker J.R."/>
        </authorList>
    </citation>
    <scope>NUCLEOTIDE SEQUENCE [LARGE SCALE MRNA]</scope>
    <source>
        <strain>cv. Columbia</strain>
    </source>
</reference>
<reference key="4">
    <citation type="journal article" date="2007" name="Mol. Cell. Proteomics">
        <title>Multidimensional protein identification technology (MudPIT) analysis of ubiquitinated proteins in plants.</title>
        <authorList>
            <person name="Maor R."/>
            <person name="Jones A."/>
            <person name="Nuehse T.S."/>
            <person name="Studholme D.J."/>
            <person name="Peck S.C."/>
            <person name="Shirasu K."/>
        </authorList>
    </citation>
    <scope>IDENTIFICATION BY MASS SPECTROMETRY [LARGE SCALE ANALYSIS]</scope>
    <source>
        <strain>cv. Landsberg erecta</strain>
    </source>
</reference>
<organism>
    <name type="scientific">Arabidopsis thaliana</name>
    <name type="common">Mouse-ear cress</name>
    <dbReference type="NCBI Taxonomy" id="3702"/>
    <lineage>
        <taxon>Eukaryota</taxon>
        <taxon>Viridiplantae</taxon>
        <taxon>Streptophyta</taxon>
        <taxon>Embryophyta</taxon>
        <taxon>Tracheophyta</taxon>
        <taxon>Spermatophyta</taxon>
        <taxon>Magnoliopsida</taxon>
        <taxon>eudicotyledons</taxon>
        <taxon>Gunneridae</taxon>
        <taxon>Pentapetalae</taxon>
        <taxon>rosids</taxon>
        <taxon>malvids</taxon>
        <taxon>Brassicales</taxon>
        <taxon>Brassicaceae</taxon>
        <taxon>Camelineae</taxon>
        <taxon>Arabidopsis</taxon>
    </lineage>
</organism>
<keyword id="KW-0002">3D-structure</keyword>
<keyword id="KW-0021">Allosteric enzyme</keyword>
<keyword id="KW-0119">Carbohydrate metabolism</keyword>
<keyword id="KW-0963">Cytoplasm</keyword>
<keyword id="KW-0328">Glycosyltransferase</keyword>
<keyword id="KW-0663">Pyridoxal phosphate</keyword>
<keyword id="KW-1185">Reference proteome</keyword>
<keyword id="KW-0808">Transferase</keyword>
<dbReference type="EC" id="2.4.1.1"/>
<dbReference type="EMBL" id="AL133292">
    <property type="protein sequence ID" value="CAB61943.1"/>
    <property type="molecule type" value="Genomic_DNA"/>
</dbReference>
<dbReference type="EMBL" id="CP002686">
    <property type="protein sequence ID" value="AEE78225.1"/>
    <property type="molecule type" value="Genomic_DNA"/>
</dbReference>
<dbReference type="EMBL" id="AY056807">
    <property type="protein sequence ID" value="AAL10498.1"/>
    <property type="molecule type" value="mRNA"/>
</dbReference>
<dbReference type="EMBL" id="AY090236">
    <property type="protein sequence ID" value="AAL90900.1"/>
    <property type="molecule type" value="mRNA"/>
</dbReference>
<dbReference type="EMBL" id="BT003012">
    <property type="protein sequence ID" value="AAO23577.1"/>
    <property type="molecule type" value="mRNA"/>
</dbReference>
<dbReference type="PIR" id="T45633">
    <property type="entry name" value="T45633"/>
</dbReference>
<dbReference type="RefSeq" id="NP_190281.1">
    <property type="nucleotide sequence ID" value="NM_114564.3"/>
</dbReference>
<dbReference type="PDB" id="4BQE">
    <property type="method" value="X-ray"/>
    <property type="resolution" value="1.70 A"/>
    <property type="chains" value="A/B=1-841"/>
</dbReference>
<dbReference type="PDB" id="4BQF">
    <property type="method" value="X-ray"/>
    <property type="resolution" value="2.35 A"/>
    <property type="chains" value="A/B=1-841"/>
</dbReference>
<dbReference type="PDB" id="4BQI">
    <property type="method" value="X-ray"/>
    <property type="resolution" value="1.90 A"/>
    <property type="chains" value="A/B=1-841"/>
</dbReference>
<dbReference type="PDBsum" id="4BQE"/>
<dbReference type="PDBsum" id="4BQF"/>
<dbReference type="PDBsum" id="4BQI"/>
<dbReference type="SMR" id="Q9SD76"/>
<dbReference type="BioGRID" id="9170">
    <property type="interactions" value="1"/>
</dbReference>
<dbReference type="FunCoup" id="Q9SD76">
    <property type="interactions" value="2181"/>
</dbReference>
<dbReference type="STRING" id="3702.Q9SD76"/>
<dbReference type="CAZy" id="GT35">
    <property type="family name" value="Glycosyltransferase Family 35"/>
</dbReference>
<dbReference type="GlyGen" id="Q9SD76">
    <property type="glycosylation" value="1 site"/>
</dbReference>
<dbReference type="iPTMnet" id="Q9SD76"/>
<dbReference type="PaxDb" id="3702-AT3G46970.1"/>
<dbReference type="ProteomicsDB" id="236155"/>
<dbReference type="EnsemblPlants" id="AT3G46970.1">
    <property type="protein sequence ID" value="AT3G46970.1"/>
    <property type="gene ID" value="AT3G46970"/>
</dbReference>
<dbReference type="GeneID" id="823850"/>
<dbReference type="Gramene" id="AT3G46970.1">
    <property type="protein sequence ID" value="AT3G46970.1"/>
    <property type="gene ID" value="AT3G46970"/>
</dbReference>
<dbReference type="KEGG" id="ath:AT3G46970"/>
<dbReference type="Araport" id="AT3G46970"/>
<dbReference type="TAIR" id="AT3G46970">
    <property type="gene designation" value="PHS2"/>
</dbReference>
<dbReference type="eggNOG" id="KOG2099">
    <property type="taxonomic scope" value="Eukaryota"/>
</dbReference>
<dbReference type="HOGENOM" id="CLU_010198_2_0_1"/>
<dbReference type="InParanoid" id="Q9SD76"/>
<dbReference type="OMA" id="WLKQANP"/>
<dbReference type="PhylomeDB" id="Q9SD76"/>
<dbReference type="BioCyc" id="ARA:AT3G46970-MONOMER"/>
<dbReference type="BRENDA" id="2.4.1.1">
    <property type="organism ID" value="399"/>
</dbReference>
<dbReference type="CD-CODE" id="4299E36E">
    <property type="entry name" value="Nucleolus"/>
</dbReference>
<dbReference type="EvolutionaryTrace" id="Q9SD76"/>
<dbReference type="PRO" id="PR:Q9SD76"/>
<dbReference type="Proteomes" id="UP000006548">
    <property type="component" value="Chromosome 3"/>
</dbReference>
<dbReference type="ExpressionAtlas" id="Q9SD76">
    <property type="expression patterns" value="baseline and differential"/>
</dbReference>
<dbReference type="GO" id="GO:0009507">
    <property type="term" value="C:chloroplast"/>
    <property type="evidence" value="ECO:0007005"/>
    <property type="project" value="TAIR"/>
</dbReference>
<dbReference type="GO" id="GO:0005829">
    <property type="term" value="C:cytosol"/>
    <property type="evidence" value="ECO:0007005"/>
    <property type="project" value="TAIR"/>
</dbReference>
<dbReference type="GO" id="GO:0004645">
    <property type="term" value="F:1,4-alpha-oligoglucan phosphorylase activity"/>
    <property type="evidence" value="ECO:0000314"/>
    <property type="project" value="TAIR"/>
</dbReference>
<dbReference type="GO" id="GO:0008184">
    <property type="term" value="F:glycogen phosphorylase activity"/>
    <property type="evidence" value="ECO:0007669"/>
    <property type="project" value="InterPro"/>
</dbReference>
<dbReference type="GO" id="GO:0030170">
    <property type="term" value="F:pyridoxal phosphate binding"/>
    <property type="evidence" value="ECO:0007669"/>
    <property type="project" value="InterPro"/>
</dbReference>
<dbReference type="GO" id="GO:0005975">
    <property type="term" value="P:carbohydrate metabolic process"/>
    <property type="evidence" value="ECO:0007669"/>
    <property type="project" value="InterPro"/>
</dbReference>
<dbReference type="GO" id="GO:0009414">
    <property type="term" value="P:response to water deprivation"/>
    <property type="evidence" value="ECO:0000315"/>
    <property type="project" value="TAIR"/>
</dbReference>
<dbReference type="CDD" id="cd04300">
    <property type="entry name" value="GT35_Glycogen_Phosphorylase"/>
    <property type="match status" value="1"/>
</dbReference>
<dbReference type="FunFam" id="3.40.50.2000:FF:000002">
    <property type="entry name" value="Alpha-1,4 glucan phosphorylase"/>
    <property type="match status" value="1"/>
</dbReference>
<dbReference type="FunFam" id="3.40.50.2000:FF:000003">
    <property type="entry name" value="Alpha-1,4 glucan phosphorylase"/>
    <property type="match status" value="1"/>
</dbReference>
<dbReference type="Gene3D" id="3.40.50.2000">
    <property type="entry name" value="Glycogen Phosphorylase B"/>
    <property type="match status" value="2"/>
</dbReference>
<dbReference type="InterPro" id="IPR011833">
    <property type="entry name" value="Glycg_phsphrylas"/>
</dbReference>
<dbReference type="InterPro" id="IPR000811">
    <property type="entry name" value="Glyco_trans_35"/>
</dbReference>
<dbReference type="InterPro" id="IPR035090">
    <property type="entry name" value="Pyridoxal_P_attach_site"/>
</dbReference>
<dbReference type="NCBIfam" id="TIGR02093">
    <property type="entry name" value="P_ylase"/>
    <property type="match status" value="1"/>
</dbReference>
<dbReference type="PANTHER" id="PTHR11468:SF4">
    <property type="entry name" value="ALPHA-GLUCAN PHOSPHORYLASE 2, CYTOSOLIC"/>
    <property type="match status" value="1"/>
</dbReference>
<dbReference type="PANTHER" id="PTHR11468">
    <property type="entry name" value="GLYCOGEN PHOSPHORYLASE"/>
    <property type="match status" value="1"/>
</dbReference>
<dbReference type="Pfam" id="PF00343">
    <property type="entry name" value="Phosphorylase"/>
    <property type="match status" value="1"/>
</dbReference>
<dbReference type="PIRSF" id="PIRSF000460">
    <property type="entry name" value="Pprylas_GlgP"/>
    <property type="match status" value="1"/>
</dbReference>
<dbReference type="SUPFAM" id="SSF53756">
    <property type="entry name" value="UDP-Glycosyltransferase/glycogen phosphorylase"/>
    <property type="match status" value="1"/>
</dbReference>
<dbReference type="PROSITE" id="PS00102">
    <property type="entry name" value="PHOSPHORYLASE"/>
    <property type="match status" value="1"/>
</dbReference>
<protein>
    <recommendedName>
        <fullName>Alpha-glucan phosphorylase 2, cytosolic</fullName>
        <shortName>AtPHS2</shortName>
        <ecNumber>2.4.1.1</ecNumber>
    </recommendedName>
    <alternativeName>
        <fullName>Alpha-glucan phosphorylase, H isozyme</fullName>
    </alternativeName>
    <alternativeName>
        <fullName>Starch phosphorylase H</fullName>
    </alternativeName>
</protein>
<name>PHS2_ARATH</name>
<gene>
    <name type="primary">PHS2</name>
    <name type="ordered locus">At3g46970</name>
    <name type="ORF">F13I12.20</name>
</gene>
<comment type="function">
    <text evidence="1">Phosphorylase is an important allosteric enzyme in carbohydrate metabolism. Enzymes from different sources differ in their regulatory mechanisms and in their natural substrates. However, all known phosphorylases share catalytic and structural properties (By similarity).</text>
</comment>
<comment type="catalytic activity">
    <reaction>
        <text>[(1-&gt;4)-alpha-D-glucosyl](n) + phosphate = [(1-&gt;4)-alpha-D-glucosyl](n-1) + alpha-D-glucose 1-phosphate</text>
        <dbReference type="Rhea" id="RHEA:41732"/>
        <dbReference type="Rhea" id="RHEA-COMP:9584"/>
        <dbReference type="Rhea" id="RHEA-COMP:9586"/>
        <dbReference type="ChEBI" id="CHEBI:15444"/>
        <dbReference type="ChEBI" id="CHEBI:43474"/>
        <dbReference type="ChEBI" id="CHEBI:58601"/>
        <dbReference type="EC" id="2.4.1.1"/>
    </reaction>
</comment>
<comment type="cofactor">
    <cofactor evidence="1">
        <name>pyridoxal 5'-phosphate</name>
        <dbReference type="ChEBI" id="CHEBI:597326"/>
    </cofactor>
</comment>
<comment type="subcellular location">
    <subcellularLocation>
        <location evidence="1">Cytoplasm</location>
    </subcellularLocation>
</comment>
<comment type="similarity">
    <text evidence="3">Belongs to the glycogen phosphorylase family.</text>
</comment>
<proteinExistence type="evidence at protein level"/>